<geneLocation type="plasmid">
    <name>F</name>
</geneLocation>
<gene>
    <name type="primary">traC</name>
    <name type="ordered locus">ECOK12F084</name>
</gene>
<protein>
    <recommendedName>
        <fullName>Protein TraC</fullName>
    </recommendedName>
</protein>
<accession>P18004</accession>
<name>TRAC_ECOLI</name>
<organism>
    <name type="scientific">Escherichia coli (strain K12)</name>
    <dbReference type="NCBI Taxonomy" id="83333"/>
    <lineage>
        <taxon>Bacteria</taxon>
        <taxon>Pseudomonadati</taxon>
        <taxon>Pseudomonadota</taxon>
        <taxon>Gammaproteobacteria</taxon>
        <taxon>Enterobacterales</taxon>
        <taxon>Enterobacteriaceae</taxon>
        <taxon>Escherichia</taxon>
    </lineage>
</organism>
<keyword id="KW-0997">Cell inner membrane</keyword>
<keyword id="KW-1003">Cell membrane</keyword>
<keyword id="KW-0184">Conjugation</keyword>
<keyword id="KW-0903">Direct protein sequencing</keyword>
<keyword id="KW-0472">Membrane</keyword>
<keyword id="KW-0614">Plasmid</keyword>
<comment type="function">
    <text>Required for the assembly of mature F-pilin subunits into extended F pili.</text>
</comment>
<comment type="subcellular location">
    <subcellularLocation>
        <location>Cell inner membrane</location>
        <topology>Peripheral membrane protein</topology>
    </subcellularLocation>
</comment>
<feature type="chain" id="PRO_0000068447" description="Protein TraC">
    <location>
        <begin position="1"/>
        <end position="875"/>
    </location>
</feature>
<feature type="mutagenesis site" description="Allows filamentous phage infection in the absence of piliation.">
    <original>R</original>
    <variation>C</variation>
    <location>
        <position position="811"/>
    </location>
</feature>
<dbReference type="EMBL" id="M30936">
    <property type="protein sequence ID" value="AAA24905.1"/>
    <property type="molecule type" value="Genomic_DNA"/>
</dbReference>
<dbReference type="EMBL" id="U01159">
    <property type="protein sequence ID" value="AAC44180.1"/>
    <property type="molecule type" value="Genomic_DNA"/>
</dbReference>
<dbReference type="EMBL" id="AP001918">
    <property type="protein sequence ID" value="BAA97954.1"/>
    <property type="molecule type" value="Genomic_DNA"/>
</dbReference>
<dbReference type="EMBL" id="M93106">
    <property type="protein sequence ID" value="AAA24687.1"/>
    <property type="molecule type" value="Genomic_DNA"/>
</dbReference>
<dbReference type="PIR" id="JQ0813">
    <property type="entry name" value="S27572"/>
</dbReference>
<dbReference type="RefSeq" id="NP_061463.1">
    <property type="nucleotide sequence ID" value="NC_002483.1"/>
</dbReference>
<dbReference type="RefSeq" id="WP_001064243.1">
    <property type="nucleotide sequence ID" value="NZ_JACEFS010000047.1"/>
</dbReference>
<dbReference type="SMR" id="P18004"/>
<dbReference type="KEGG" id="ecoc:C3026_24520"/>
<dbReference type="PATRIC" id="fig|83333.107.peg.628"/>
<dbReference type="OrthoDB" id="9816422at2"/>
<dbReference type="PRO" id="PR:P18004"/>
<dbReference type="GO" id="GO:0005886">
    <property type="term" value="C:plasma membrane"/>
    <property type="evidence" value="ECO:0007669"/>
    <property type="project" value="UniProtKB-SubCell"/>
</dbReference>
<dbReference type="CDD" id="cd01127">
    <property type="entry name" value="TrwB_TraG_TraD_VirD4"/>
    <property type="match status" value="1"/>
</dbReference>
<dbReference type="Gene3D" id="1.10.8.730">
    <property type="match status" value="1"/>
</dbReference>
<dbReference type="Gene3D" id="3.40.50.300">
    <property type="entry name" value="P-loop containing nucleotide triphosphate hydrolases"/>
    <property type="match status" value="1"/>
</dbReference>
<dbReference type="InterPro" id="IPR053155">
    <property type="entry name" value="F-pilin_assembly_TraC"/>
</dbReference>
<dbReference type="InterPro" id="IPR027417">
    <property type="entry name" value="P-loop_NTPase"/>
</dbReference>
<dbReference type="InterPro" id="IPR043964">
    <property type="entry name" value="P-loop_TraG"/>
</dbReference>
<dbReference type="InterPro" id="IPR014117">
    <property type="entry name" value="TraC-F-type"/>
</dbReference>
<dbReference type="InterPro" id="IPR025955">
    <property type="entry name" value="TraC/Conjuga_ATPase"/>
</dbReference>
<dbReference type="InterPro" id="IPR045978">
    <property type="entry name" value="TRAC_dom"/>
</dbReference>
<dbReference type="NCBIfam" id="NF010278">
    <property type="entry name" value="PRK13721.1"/>
    <property type="match status" value="1"/>
</dbReference>
<dbReference type="NCBIfam" id="TIGR02746">
    <property type="entry name" value="TraC-F-type"/>
    <property type="match status" value="1"/>
</dbReference>
<dbReference type="PANTHER" id="PTHR38467">
    <property type="match status" value="1"/>
</dbReference>
<dbReference type="PANTHER" id="PTHR38467:SF1">
    <property type="entry name" value="CONJUGATIVE TRANSFER: ASSEMBLY"/>
    <property type="match status" value="1"/>
</dbReference>
<dbReference type="Pfam" id="PF19357">
    <property type="entry name" value="DUF5934"/>
    <property type="match status" value="1"/>
</dbReference>
<dbReference type="Pfam" id="PF19044">
    <property type="entry name" value="P-loop_TraG"/>
    <property type="match status" value="1"/>
</dbReference>
<dbReference type="Pfam" id="PF11130">
    <property type="entry name" value="TraC_F_IV"/>
    <property type="match status" value="1"/>
</dbReference>
<dbReference type="SUPFAM" id="SSF52540">
    <property type="entry name" value="P-loop containing nucleoside triphosphate hydrolases"/>
    <property type="match status" value="1"/>
</dbReference>
<proteinExistence type="evidence at protein level"/>
<sequence>MNNPLEAVTQAVNSLVTALKLPDESAKANEVLGEMSFPQFSRLLPYRDYNQESGLFMNDTTMGFMLEAIPINGANESIVEALDHMLRTKLPRGIPLCIHLMSSQLVGDRIEYGLREFSWSGEQAERFNAITRAYYMKAAATQFPLPEGMNLPLTLRHYRVFISYCSPSKKKSRADILEMENLVKIIRASLQGASITTQTVDAQAFIDIVGEMINHNPDSLYPKRRQLDPYSDLNYQCVEDSFDLKVRADYLTLGLRENGRNSTARILNFHLARNPEIAFLWNMADNYSNLLNPELSISCPFILTLTLVVEDQVKTHSEANLKYMDLEKKSKTSYAKWFPSVEKEAKEWGELRQRLGSGQSSVVSYFLNITAFCKDNNETALEVEQDILNSFRKNGFELISPRFNHMRNFLTCLPFMAGKGLFKQLKEAGVVQRAESFNVANLMPLVADNPLTPAGLLAPTYRNQLAFIDIFFRGMNNTNYNMAVCGTSGAGKTGLIQPLIRSVLDSGGFAVVFDMGDGYKSLCENMGGVYLDGETLRFNPFANITDIDQSAERVRDQLSVMASPNGNLDEVHEGLLLQAVRASWLAKENRARIDDVVDFLKNASDSEQYAESPTIRSRLDEMIVLLDQYTANGTYGQYFNSDEPSLRDDAKMVVLELGGLEDRPSLLVAVMFSLIIYIENRMYRTPRNLKKLNVIDEGWRLLDFKNHKVGEFIEKGYRTARRHTGAYITITQNIVDFDSDKASSAARAAWGNSSYKIILKQSAKEFAKYNQLYPDQFLPLQRDMIGKFGAAKDQWFSSFLLQVENHSSWHRLFVDPLSRAMYSSDGPDFEFVQQKRKEGLSIHEAVWQLAWKKSGPEMASLEAWLEEHEKYRSVA</sequence>
<reference key="1">
    <citation type="journal article" date="1990" name="Gene">
        <title>Nucleotide sequence of the F plasmid gene, traC, and identification of its product.</title>
        <authorList>
            <person name="Schandel K.A."/>
            <person name="Maneewannakul S."/>
            <person name="Vonder Haar R.A."/>
            <person name="Ippen-Ihler K."/>
            <person name="Webster R.E."/>
        </authorList>
    </citation>
    <scope>NUCLEOTIDE SEQUENCE [GENOMIC DNA]</scope>
    <scope>PROTEIN SEQUENCE OF 1-20</scope>
    <source>
        <strain>K12</strain>
    </source>
</reference>
<reference key="2">
    <citation type="journal article" date="1994" name="Microbiol. Rev.">
        <title>Analysis of the sequence and gene products of the transfer region of the F sex factor.</title>
        <authorList>
            <person name="Frost L.S."/>
            <person name="Ippen-Ihler K."/>
            <person name="Skurray R.A."/>
        </authorList>
    </citation>
    <scope>NUCLEOTIDE SEQUENCE [GENOMIC DNA]</scope>
</reference>
<reference key="3">
    <citation type="submission" date="2000-04" db="EMBL/GenBank/DDBJ databases">
        <title>Complete nucleotide sequence of the F plasmid: its implications for organization and diversification of plasmid genomes.</title>
        <authorList>
            <person name="Shimizu H."/>
            <person name="Saitoh Y."/>
            <person name="Suda Y."/>
            <person name="Uehara K."/>
            <person name="Sampei G."/>
            <person name="Mizobuchi K."/>
        </authorList>
    </citation>
    <scope>NUCLEOTIDE SEQUENCE [LARGE SCALE GENOMIC DNA]</scope>
    <source>
        <strain>K12 / CR63</strain>
    </source>
</reference>
<reference key="4">
    <citation type="journal article" date="1992" name="J. Bacteriol.">
        <title>Characterization, localization, and sequence of F transfer region products: the pilus assembly gene product TraW and a new product, TrbI.</title>
        <authorList>
            <person name="Maneewannakul S."/>
            <person name="Maneewannakul K."/>
            <person name="Ippen-Ihler K."/>
        </authorList>
    </citation>
    <scope>NUCLEOTIDE SEQUENCE [GENOMIC DNA] OF 867-875</scope>
    <source>
        <strain>K12</strain>
    </source>
</reference>